<feature type="chain" id="PRO_0000106163" description="Putative gene 57 protein">
    <location>
        <begin position="1"/>
        <end position="113"/>
    </location>
</feature>
<gene>
    <name type="primary">57</name>
</gene>
<organism>
    <name type="scientific">Bacillus phage SP01</name>
    <name type="common">Bacteriophage SP01</name>
    <dbReference type="NCBI Taxonomy" id="2884427"/>
    <lineage>
        <taxon>Viruses</taxon>
        <taxon>Duplodnaviria</taxon>
        <taxon>Heunggongvirae</taxon>
        <taxon>Uroviricota</taxon>
        <taxon>Caudoviricetes</taxon>
        <taxon>Herelleviridae</taxon>
        <taxon>Spounavirinae</taxon>
        <taxon>Okubovirus</taxon>
        <taxon>Okubovirus SPO1</taxon>
    </lineage>
</organism>
<reference key="1">
    <citation type="journal article" date="1998" name="Virology">
        <title>Genes and regulatory sites of the 'host-takeover module' in the terminal redundancy of Bacillus subtilis bacteriophage SPO1.</title>
        <authorList>
            <person name="Stewart C.R."/>
            <person name="Gaslightwala I."/>
            <person name="Hinata K."/>
            <person name="Krolikowski K.A."/>
            <person name="Needleman D.S."/>
            <person name="Peng A.S.-Y."/>
            <person name="Peterman M.A."/>
            <person name="Tobias A."/>
            <person name="Wei P."/>
        </authorList>
    </citation>
    <scope>NUCLEOTIDE SEQUENCE [GENOMIC DNA]</scope>
</reference>
<accession>O48411</accession>
<organismHost>
    <name type="scientific">Bacillus subtilis</name>
    <dbReference type="NCBI Taxonomy" id="1423"/>
</organismHost>
<proteinExistence type="predicted"/>
<protein>
    <recommendedName>
        <fullName>Putative gene 57 protein</fullName>
    </recommendedName>
</protein>
<sequence>MTLFIAGVTLEEVREATVSALFVKLEQEKKALYLGAGSEDSLNLCKSTLDKVQEDYPLDDMEKDYLRDLLQFWLSRLFLGDGFEGEIPDSSEDLRRTATTAFTYTAAIRHYCM</sequence>
<name>GP57_BPSP1</name>
<dbReference type="EMBL" id="AF031901">
    <property type="protein sequence ID" value="AAC29026.1"/>
    <property type="molecule type" value="Genomic_DNA"/>
</dbReference>
<dbReference type="RefSeq" id="YP_002300303.1">
    <property type="nucleotide sequence ID" value="NC_011421.1"/>
</dbReference>
<dbReference type="GeneID" id="7009016"/>
<dbReference type="KEGG" id="vg:7009016"/>